<name>AT1B1_CHICK</name>
<comment type="function">
    <text>This is the non-catalytic component of the active enzyme, which catalyzes the hydrolysis of ATP coupled with the exchange of Na(+) and K(+) ions across the plasma membrane. The beta subunit regulates, through assembly of alpha/beta heterodimers, the number of sodium pumps transported to the plasma membrane.</text>
</comment>
<comment type="subunit">
    <text evidence="3">The sodium/potassium-transporting ATPase is composed of a catalytic alpha subunit, an auxiliary non-catalytic beta subunit and an additional regulatory subunit.</text>
</comment>
<comment type="interaction">
    <interactant intactId="EBI-7206371">
        <id>P08251</id>
    </interactant>
    <interactant intactId="EBI-1635766">
        <id>Q8AYS8</id>
        <label>KCNMA1</label>
    </interactant>
    <organismsDiffer>false</organismsDiffer>
    <experiments>3</experiments>
</comment>
<comment type="interaction">
    <interactant intactId="EBI-7206371">
        <id>P08251</id>
    </interactant>
    <interactant intactId="EBI-1633915">
        <id>Q08460</id>
        <label>Kcnma1</label>
    </interactant>
    <organismsDiffer>true</organismsDiffer>
    <experiments>5</experiments>
</comment>
<comment type="subcellular location">
    <subcellularLocation>
        <location evidence="3">Cell membrane</location>
        <topology>Single-pass type II membrane protein</topology>
    </subcellularLocation>
</comment>
<comment type="similarity">
    <text evidence="3">Belongs to the X(+)/potassium ATPases subunit beta family.</text>
</comment>
<protein>
    <recommendedName>
        <fullName>Sodium/potassium-transporting ATPase subunit beta-1</fullName>
    </recommendedName>
    <alternativeName>
        <fullName>Sodium/potassium-dependent ATPase subunit beta-1</fullName>
    </alternativeName>
</protein>
<evidence type="ECO:0000250" key="1"/>
<evidence type="ECO:0000255" key="2"/>
<evidence type="ECO:0000305" key="3"/>
<reference key="1">
    <citation type="journal article" date="1987" name="J. Biol. Chem.">
        <title>Expression of hybrid (Na+ + K+)-ATPase molecules after transfection of mouse Ltk-cells with DNA encoding the beta-subunit of an avian brain sodium pump.</title>
        <authorList>
            <person name="Takeyasu K."/>
            <person name="Tamkun M.M."/>
            <person name="Siegel N.R."/>
            <person name="Fambrough D.M."/>
        </authorList>
    </citation>
    <scope>NUCLEOTIDE SEQUENCE [MRNA]</scope>
</reference>
<gene>
    <name type="primary">ATP1B1</name>
</gene>
<sequence length="305" mass="34941">MARGKANDGDGNWKKFIWNSEKKELLGRTGGSWFKILLFYVIFYGCLAGIFIGTIQVMLLTVSEFEPKYQDRVAPPGLTQVPQVQKTEISFTVNDPKSYDPYVKNLEGFLNKYSAGEQTDNIVFQDCGDIPTDYKERGPYNDAQGQKKVCKFKREWLENCSGLQDNTFGYKDGKPCILVKLNRIIGFKPKAPENESLPSDLAGKYNPYLIPVHCVAKRDEDADKIGMVEYYGMGGYPGFALQYYPYYGRLLQPQYLQPLVAVQFTNLTYDVEVRVECKEYGQNIQYSDKDRFQGRFDIKFDIKSS</sequence>
<organism>
    <name type="scientific">Gallus gallus</name>
    <name type="common">Chicken</name>
    <dbReference type="NCBI Taxonomy" id="9031"/>
    <lineage>
        <taxon>Eukaryota</taxon>
        <taxon>Metazoa</taxon>
        <taxon>Chordata</taxon>
        <taxon>Craniata</taxon>
        <taxon>Vertebrata</taxon>
        <taxon>Euteleostomi</taxon>
        <taxon>Archelosauria</taxon>
        <taxon>Archosauria</taxon>
        <taxon>Dinosauria</taxon>
        <taxon>Saurischia</taxon>
        <taxon>Theropoda</taxon>
        <taxon>Coelurosauria</taxon>
        <taxon>Aves</taxon>
        <taxon>Neognathae</taxon>
        <taxon>Galloanserae</taxon>
        <taxon>Galliformes</taxon>
        <taxon>Phasianidae</taxon>
        <taxon>Phasianinae</taxon>
        <taxon>Gallus</taxon>
    </lineage>
</organism>
<accession>P08251</accession>
<keyword id="KW-1003">Cell membrane</keyword>
<keyword id="KW-1015">Disulfide bond</keyword>
<keyword id="KW-0325">Glycoprotein</keyword>
<keyword id="KW-0406">Ion transport</keyword>
<keyword id="KW-0472">Membrane</keyword>
<keyword id="KW-0630">Potassium</keyword>
<keyword id="KW-0633">Potassium transport</keyword>
<keyword id="KW-1185">Reference proteome</keyword>
<keyword id="KW-0735">Signal-anchor</keyword>
<keyword id="KW-0915">Sodium</keyword>
<keyword id="KW-0739">Sodium transport</keyword>
<keyword id="KW-0740">Sodium/potassium transport</keyword>
<keyword id="KW-0812">Transmembrane</keyword>
<keyword id="KW-1133">Transmembrane helix</keyword>
<keyword id="KW-0813">Transport</keyword>
<feature type="chain" id="PRO_0000219102" description="Sodium/potassium-transporting ATPase subunit beta-1">
    <location>
        <begin position="1"/>
        <end position="305"/>
    </location>
</feature>
<feature type="topological domain" description="Cytoplasmic" evidence="2">
    <location>
        <begin position="1"/>
        <end position="35"/>
    </location>
</feature>
<feature type="transmembrane region" description="Helical; Signal-anchor for type II membrane protein" evidence="2">
    <location>
        <begin position="36"/>
        <end position="63"/>
    </location>
</feature>
<feature type="topological domain" description="Extracellular" evidence="2">
    <location>
        <begin position="64"/>
        <end position="305"/>
    </location>
</feature>
<feature type="glycosylation site" description="N-linked (GlcNAc...) asparagine" evidence="1">
    <location>
        <position position="159"/>
    </location>
</feature>
<feature type="glycosylation site" description="N-linked (GlcNAc...) asparagine" evidence="1">
    <location>
        <position position="194"/>
    </location>
</feature>
<feature type="glycosylation site" description="N-linked (GlcNAc...) asparagine" evidence="1">
    <location>
        <position position="266"/>
    </location>
</feature>
<feature type="disulfide bond" evidence="1">
    <location>
        <begin position="127"/>
        <end position="150"/>
    </location>
</feature>
<feature type="disulfide bond" evidence="1">
    <location>
        <begin position="160"/>
        <end position="176"/>
    </location>
</feature>
<feature type="disulfide bond" evidence="1">
    <location>
        <begin position="214"/>
        <end position="277"/>
    </location>
</feature>
<dbReference type="EMBL" id="J02787">
    <property type="protein sequence ID" value="AAA48608.1"/>
    <property type="molecule type" value="mRNA"/>
</dbReference>
<dbReference type="PIR" id="A28491">
    <property type="entry name" value="A28491"/>
</dbReference>
<dbReference type="RefSeq" id="NP_990851.1">
    <property type="nucleotide sequence ID" value="NM_205520.4"/>
</dbReference>
<dbReference type="SMR" id="P08251"/>
<dbReference type="DIP" id="DIP-29N"/>
<dbReference type="FunCoup" id="P08251">
    <property type="interactions" value="1916"/>
</dbReference>
<dbReference type="IntAct" id="P08251">
    <property type="interactions" value="2"/>
</dbReference>
<dbReference type="MINT" id="P08251"/>
<dbReference type="STRING" id="9031.ENSGALP00000036140"/>
<dbReference type="GlyCosmos" id="P08251">
    <property type="glycosylation" value="3 sites, No reported glycans"/>
</dbReference>
<dbReference type="GlyGen" id="P08251">
    <property type="glycosylation" value="3 sites"/>
</dbReference>
<dbReference type="PaxDb" id="9031-ENSGALP00000024537"/>
<dbReference type="GeneID" id="396529"/>
<dbReference type="KEGG" id="gga:396529"/>
<dbReference type="CTD" id="481"/>
<dbReference type="VEuPathDB" id="HostDB:geneid_396529"/>
<dbReference type="eggNOG" id="KOG3927">
    <property type="taxonomic scope" value="Eukaryota"/>
</dbReference>
<dbReference type="InParanoid" id="P08251"/>
<dbReference type="OrthoDB" id="5912413at2759"/>
<dbReference type="PhylomeDB" id="P08251"/>
<dbReference type="PRO" id="PR:P08251"/>
<dbReference type="Proteomes" id="UP000000539">
    <property type="component" value="Unassembled WGS sequence"/>
</dbReference>
<dbReference type="GO" id="GO:0005890">
    <property type="term" value="C:sodium:potassium-exchanging ATPase complex"/>
    <property type="evidence" value="ECO:0000318"/>
    <property type="project" value="GO_Central"/>
</dbReference>
<dbReference type="GO" id="GO:0001671">
    <property type="term" value="F:ATPase activator activity"/>
    <property type="evidence" value="ECO:0000318"/>
    <property type="project" value="GO_Central"/>
</dbReference>
<dbReference type="GO" id="GO:0030007">
    <property type="term" value="P:intracellular potassium ion homeostasis"/>
    <property type="evidence" value="ECO:0000318"/>
    <property type="project" value="GO_Central"/>
</dbReference>
<dbReference type="GO" id="GO:0006883">
    <property type="term" value="P:intracellular sodium ion homeostasis"/>
    <property type="evidence" value="ECO:0000318"/>
    <property type="project" value="GO_Central"/>
</dbReference>
<dbReference type="GO" id="GO:1990573">
    <property type="term" value="P:potassium ion import across plasma membrane"/>
    <property type="evidence" value="ECO:0000318"/>
    <property type="project" value="GO_Central"/>
</dbReference>
<dbReference type="GO" id="GO:0036376">
    <property type="term" value="P:sodium ion export across plasma membrane"/>
    <property type="evidence" value="ECO:0000318"/>
    <property type="project" value="GO_Central"/>
</dbReference>
<dbReference type="FunFam" id="1.20.5.170:FF:000062">
    <property type="entry name" value="Sodium/potassium-transporting ATPase subunit beta"/>
    <property type="match status" value="1"/>
</dbReference>
<dbReference type="FunFam" id="2.60.40.1660:FF:000002">
    <property type="entry name" value="Sodium/potassium-transporting ATPase subunit beta"/>
    <property type="match status" value="1"/>
</dbReference>
<dbReference type="Gene3D" id="2.60.40.1660">
    <property type="entry name" value="Na, k-atpase alpha subunit"/>
    <property type="match status" value="1"/>
</dbReference>
<dbReference type="InterPro" id="IPR000402">
    <property type="entry name" value="Na/K_ATPase_sub_beta"/>
</dbReference>
<dbReference type="InterPro" id="IPR038702">
    <property type="entry name" value="Na/K_ATPase_sub_beta_sf"/>
</dbReference>
<dbReference type="NCBIfam" id="TIGR01107">
    <property type="entry name" value="Na_K_ATPase_bet"/>
    <property type="match status" value="1"/>
</dbReference>
<dbReference type="PANTHER" id="PTHR11523">
    <property type="entry name" value="SODIUM/POTASSIUM-DEPENDENT ATPASE BETA SUBUNIT"/>
    <property type="match status" value="1"/>
</dbReference>
<dbReference type="PANTHER" id="PTHR11523:SF10">
    <property type="entry name" value="SODIUM_POTASSIUM-TRANSPORTING ATPASE SUBUNIT BETA-1"/>
    <property type="match status" value="1"/>
</dbReference>
<dbReference type="Pfam" id="PF00287">
    <property type="entry name" value="Na_K-ATPase"/>
    <property type="match status" value="1"/>
</dbReference>
<dbReference type="PROSITE" id="PS00390">
    <property type="entry name" value="ATPASE_NA_K_BETA_1"/>
    <property type="match status" value="1"/>
</dbReference>
<dbReference type="PROSITE" id="PS00391">
    <property type="entry name" value="ATPASE_NA_K_BETA_2"/>
    <property type="match status" value="1"/>
</dbReference>
<proteinExistence type="evidence at protein level"/>